<gene>
    <name type="primary">pyrI</name>
    <name type="ordered locus">MTH_850</name>
</gene>
<protein>
    <recommendedName>
        <fullName>Aspartate carbamoyltransferase regulatory chain</fullName>
    </recommendedName>
</protein>
<feature type="chain" id="PRO_0000142335" description="Aspartate carbamoyltransferase regulatory chain">
    <location>
        <begin position="1"/>
        <end position="156"/>
    </location>
</feature>
<feature type="binding site" evidence="1">
    <location>
        <position position="111"/>
    </location>
    <ligand>
        <name>Zn(2+)</name>
        <dbReference type="ChEBI" id="CHEBI:29105"/>
    </ligand>
</feature>
<feature type="binding site" evidence="1">
    <location>
        <position position="116"/>
    </location>
    <ligand>
        <name>Zn(2+)</name>
        <dbReference type="ChEBI" id="CHEBI:29105"/>
    </ligand>
</feature>
<feature type="binding site" evidence="1">
    <location>
        <position position="140"/>
    </location>
    <ligand>
        <name>Zn(2+)</name>
        <dbReference type="ChEBI" id="CHEBI:29105"/>
    </ligand>
</feature>
<feature type="binding site" evidence="1">
    <location>
        <position position="143"/>
    </location>
    <ligand>
        <name>Zn(2+)</name>
        <dbReference type="ChEBI" id="CHEBI:29105"/>
    </ligand>
</feature>
<name>PYRI_METTH</name>
<proteinExistence type="inferred from homology"/>
<reference key="1">
    <citation type="journal article" date="1997" name="J. Bacteriol.">
        <title>Complete genome sequence of Methanobacterium thermoautotrophicum deltaH: functional analysis and comparative genomics.</title>
        <authorList>
            <person name="Smith D.R."/>
            <person name="Doucette-Stamm L.A."/>
            <person name="Deloughery C."/>
            <person name="Lee H.-M."/>
            <person name="Dubois J."/>
            <person name="Aldredge T."/>
            <person name="Bashirzadeh R."/>
            <person name="Blakely D."/>
            <person name="Cook R."/>
            <person name="Gilbert K."/>
            <person name="Harrison D."/>
            <person name="Hoang L."/>
            <person name="Keagle P."/>
            <person name="Lumm W."/>
            <person name="Pothier B."/>
            <person name="Qiu D."/>
            <person name="Spadafora R."/>
            <person name="Vicare R."/>
            <person name="Wang Y."/>
            <person name="Wierzbowski J."/>
            <person name="Gibson R."/>
            <person name="Jiwani N."/>
            <person name="Caruso A."/>
            <person name="Bush D."/>
            <person name="Safer H."/>
            <person name="Patwell D."/>
            <person name="Prabhakar S."/>
            <person name="McDougall S."/>
            <person name="Shimer G."/>
            <person name="Goyal A."/>
            <person name="Pietrovski S."/>
            <person name="Church G.M."/>
            <person name="Daniels C.J."/>
            <person name="Mao J.-I."/>
            <person name="Rice P."/>
            <person name="Noelling J."/>
            <person name="Reeve J.N."/>
        </authorList>
    </citation>
    <scope>NUCLEOTIDE SEQUENCE [LARGE SCALE GENOMIC DNA]</scope>
    <source>
        <strain>ATCC 29096 / DSM 1053 / JCM 10044 / NBRC 100330 / Delta H</strain>
    </source>
</reference>
<sequence length="156" mass="17776">MDMKKPFELRVKPIKNGTVIDHITANRSLNVLNILGLPDGRSKVTVAMNMDSSQLGSKDIVKIENRELKPSEVDQIALIAPRATINIVRDYKIVEKAKVRLMDEVRGILRCPNPNCITNSDEGVENRFYVISEEPVLLRCYYCERLIEADEIESQF</sequence>
<accession>O26938</accession>
<evidence type="ECO:0000250" key="1"/>
<evidence type="ECO:0000305" key="2"/>
<keyword id="KW-0479">Metal-binding</keyword>
<keyword id="KW-0665">Pyrimidine biosynthesis</keyword>
<keyword id="KW-1185">Reference proteome</keyword>
<keyword id="KW-0862">Zinc</keyword>
<organism>
    <name type="scientific">Methanothermobacter thermautotrophicus (strain ATCC 29096 / DSM 1053 / JCM 10044 / NBRC 100330 / Delta H)</name>
    <name type="common">Methanobacterium thermoautotrophicum</name>
    <dbReference type="NCBI Taxonomy" id="187420"/>
    <lineage>
        <taxon>Archaea</taxon>
        <taxon>Methanobacteriati</taxon>
        <taxon>Methanobacteriota</taxon>
        <taxon>Methanomada group</taxon>
        <taxon>Methanobacteria</taxon>
        <taxon>Methanobacteriales</taxon>
        <taxon>Methanobacteriaceae</taxon>
        <taxon>Methanothermobacter</taxon>
    </lineage>
</organism>
<comment type="function">
    <text evidence="1">Involved in allosteric regulation of aspartate carbamoyltransferase.</text>
</comment>
<comment type="cofactor">
    <cofactor evidence="1">
        <name>Zn(2+)</name>
        <dbReference type="ChEBI" id="CHEBI:29105"/>
    </cofactor>
    <text evidence="1">Binds 1 zinc ion per subunit.</text>
</comment>
<comment type="subunit">
    <text evidence="1">Contains catalytic and regulatory chains.</text>
</comment>
<comment type="similarity">
    <text evidence="2">Belongs to the PyrI family.</text>
</comment>
<dbReference type="EMBL" id="AE000666">
    <property type="protein sequence ID" value="AAB85348.1"/>
    <property type="molecule type" value="Genomic_DNA"/>
</dbReference>
<dbReference type="PIR" id="E69213">
    <property type="entry name" value="E69213"/>
</dbReference>
<dbReference type="SMR" id="O26938"/>
<dbReference type="FunCoup" id="O26938">
    <property type="interactions" value="92"/>
</dbReference>
<dbReference type="STRING" id="187420.MTH_850"/>
<dbReference type="PaxDb" id="187420-MTH_850"/>
<dbReference type="EnsemblBacteria" id="AAB85348">
    <property type="protein sequence ID" value="AAB85348"/>
    <property type="gene ID" value="MTH_850"/>
</dbReference>
<dbReference type="KEGG" id="mth:MTH_850"/>
<dbReference type="PATRIC" id="fig|187420.15.peg.834"/>
<dbReference type="HOGENOM" id="CLU_128576_0_0_2"/>
<dbReference type="InParanoid" id="O26938"/>
<dbReference type="Proteomes" id="UP000005223">
    <property type="component" value="Chromosome"/>
</dbReference>
<dbReference type="GO" id="GO:0009347">
    <property type="term" value="C:aspartate carbamoyltransferase complex"/>
    <property type="evidence" value="ECO:0007669"/>
    <property type="project" value="InterPro"/>
</dbReference>
<dbReference type="GO" id="GO:0046872">
    <property type="term" value="F:metal ion binding"/>
    <property type="evidence" value="ECO:0007669"/>
    <property type="project" value="UniProtKB-KW"/>
</dbReference>
<dbReference type="GO" id="GO:0006207">
    <property type="term" value="P:'de novo' pyrimidine nucleobase biosynthetic process"/>
    <property type="evidence" value="ECO:0007669"/>
    <property type="project" value="InterPro"/>
</dbReference>
<dbReference type="GO" id="GO:0006221">
    <property type="term" value="P:pyrimidine nucleotide biosynthetic process"/>
    <property type="evidence" value="ECO:0007669"/>
    <property type="project" value="UniProtKB-UniRule"/>
</dbReference>
<dbReference type="Gene3D" id="2.30.30.20">
    <property type="entry name" value="Aspartate carbamoyltransferase regulatory subunit, C-terminal domain"/>
    <property type="match status" value="1"/>
</dbReference>
<dbReference type="Gene3D" id="3.30.70.140">
    <property type="entry name" value="Aspartate carbamoyltransferase regulatory subunit, N-terminal domain"/>
    <property type="match status" value="1"/>
</dbReference>
<dbReference type="HAMAP" id="MF_00002">
    <property type="entry name" value="Asp_carb_tr_reg"/>
    <property type="match status" value="1"/>
</dbReference>
<dbReference type="InterPro" id="IPR020545">
    <property type="entry name" value="Asp_carbamoyltransf_reg_N"/>
</dbReference>
<dbReference type="InterPro" id="IPR002801">
    <property type="entry name" value="Asp_carbamoylTrfase_reg"/>
</dbReference>
<dbReference type="InterPro" id="IPR020542">
    <property type="entry name" value="Asp_carbamoyltrfase_reg_C"/>
</dbReference>
<dbReference type="InterPro" id="IPR036792">
    <property type="entry name" value="Asp_carbatrfase_reg_C_sf"/>
</dbReference>
<dbReference type="InterPro" id="IPR036793">
    <property type="entry name" value="Asp_carbatrfase_reg_N_sf"/>
</dbReference>
<dbReference type="NCBIfam" id="TIGR00240">
    <property type="entry name" value="ATCase_reg"/>
    <property type="match status" value="1"/>
</dbReference>
<dbReference type="PANTHER" id="PTHR35805">
    <property type="entry name" value="ASPARTATE CARBAMOYLTRANSFERASE REGULATORY CHAIN"/>
    <property type="match status" value="1"/>
</dbReference>
<dbReference type="PANTHER" id="PTHR35805:SF1">
    <property type="entry name" value="ASPARTATE CARBAMOYLTRANSFERASE REGULATORY CHAIN"/>
    <property type="match status" value="1"/>
</dbReference>
<dbReference type="Pfam" id="PF01948">
    <property type="entry name" value="PyrI"/>
    <property type="match status" value="1"/>
</dbReference>
<dbReference type="Pfam" id="PF02748">
    <property type="entry name" value="PyrI_C"/>
    <property type="match status" value="1"/>
</dbReference>
<dbReference type="SUPFAM" id="SSF57825">
    <property type="entry name" value="Aspartate carbamoyltransferase, Regulatory-chain, C-terminal domain"/>
    <property type="match status" value="1"/>
</dbReference>
<dbReference type="SUPFAM" id="SSF54893">
    <property type="entry name" value="Aspartate carbamoyltransferase, Regulatory-chain, N-terminal domain"/>
    <property type="match status" value="1"/>
</dbReference>